<protein>
    <recommendedName>
        <fullName evidence="1">Ribosome hibernation promotion factor</fullName>
        <shortName evidence="1">HPF</shortName>
    </recommendedName>
</protein>
<proteinExistence type="inferred from homology"/>
<organism>
    <name type="scientific">Staphylococcus epidermidis (strain ATCC 35984 / DSM 28319 / BCRC 17069 / CCUG 31568 / BM 3577 / RP62A)</name>
    <dbReference type="NCBI Taxonomy" id="176279"/>
    <lineage>
        <taxon>Bacteria</taxon>
        <taxon>Bacillati</taxon>
        <taxon>Bacillota</taxon>
        <taxon>Bacilli</taxon>
        <taxon>Bacillales</taxon>
        <taxon>Staphylococcaceae</taxon>
        <taxon>Staphylococcus</taxon>
    </lineage>
</organism>
<accession>Q5HQX7</accession>
<sequence length="189" mass="22064">MIRFEIHGDNLTITDAIRNYIEEKVGKLERYFNNVPNAVAHVRVKTYSNSTTKIEVTIPLKDVTLRAEERHDDLYAGIDLITNKLERQVRKYKTRVNRKHRDRGDQDIFVAEVQESTTNNHADDIESENDIEIIRSKQFSLKPMDSEEAVLQMNLLGHDFFIFTDRETDGTSIVYRRKDGKYGLIETTE</sequence>
<gene>
    <name evidence="1" type="primary">hpf</name>
    <name type="ordered locus">SERP0419</name>
</gene>
<reference key="1">
    <citation type="journal article" date="2005" name="J. Bacteriol.">
        <title>Insights on evolution of virulence and resistance from the complete genome analysis of an early methicillin-resistant Staphylococcus aureus strain and a biofilm-producing methicillin-resistant Staphylococcus epidermidis strain.</title>
        <authorList>
            <person name="Gill S.R."/>
            <person name="Fouts D.E."/>
            <person name="Archer G.L."/>
            <person name="Mongodin E.F."/>
            <person name="DeBoy R.T."/>
            <person name="Ravel J."/>
            <person name="Paulsen I.T."/>
            <person name="Kolonay J.F."/>
            <person name="Brinkac L.M."/>
            <person name="Beanan M.J."/>
            <person name="Dodson R.J."/>
            <person name="Daugherty S.C."/>
            <person name="Madupu R."/>
            <person name="Angiuoli S.V."/>
            <person name="Durkin A.S."/>
            <person name="Haft D.H."/>
            <person name="Vamathevan J.J."/>
            <person name="Khouri H."/>
            <person name="Utterback T.R."/>
            <person name="Lee C."/>
            <person name="Dimitrov G."/>
            <person name="Jiang L."/>
            <person name="Qin H."/>
            <person name="Weidman J."/>
            <person name="Tran K."/>
            <person name="Kang K.H."/>
            <person name="Hance I.R."/>
            <person name="Nelson K.E."/>
            <person name="Fraser C.M."/>
        </authorList>
    </citation>
    <scope>NUCLEOTIDE SEQUENCE [LARGE SCALE GENOMIC DNA]</scope>
    <source>
        <strain>ATCC 35984 / DSM 28319 / BCRC 17069 / CCUG 31568 / BM 3577 / RP62A</strain>
    </source>
</reference>
<keyword id="KW-0963">Cytoplasm</keyword>
<keyword id="KW-1185">Reference proteome</keyword>
<keyword id="KW-0810">Translation regulation</keyword>
<feature type="chain" id="PRO_0000291322" description="Ribosome hibernation promotion factor">
    <location>
        <begin position="1"/>
        <end position="189"/>
    </location>
</feature>
<evidence type="ECO:0000255" key="1">
    <source>
        <dbReference type="HAMAP-Rule" id="MF_00839"/>
    </source>
</evidence>
<name>HPF_STAEQ</name>
<comment type="function">
    <text evidence="1">Required for dimerization of active 70S ribosomes into 100S ribosomes in stationary phase; 100S ribosomes are translationally inactive and sometimes present during exponential growth.</text>
</comment>
<comment type="subunit">
    <text evidence="1">Interacts with 100S ribosomes.</text>
</comment>
<comment type="subcellular location">
    <subcellularLocation>
        <location evidence="1">Cytoplasm</location>
    </subcellularLocation>
</comment>
<comment type="similarity">
    <text evidence="1">Belongs to the HPF/YfiA ribosome-associated protein family. Long HPF subfamily.</text>
</comment>
<dbReference type="EMBL" id="CP000029">
    <property type="protein sequence ID" value="AAW53825.1"/>
    <property type="molecule type" value="Genomic_DNA"/>
</dbReference>
<dbReference type="RefSeq" id="WP_001829676.1">
    <property type="nucleotide sequence ID" value="NC_002976.3"/>
</dbReference>
<dbReference type="SMR" id="Q5HQX7"/>
<dbReference type="STRING" id="176279.SERP0419"/>
<dbReference type="KEGG" id="ser:SERP0419"/>
<dbReference type="eggNOG" id="COG1544">
    <property type="taxonomic scope" value="Bacteria"/>
</dbReference>
<dbReference type="HOGENOM" id="CLU_071472_0_3_9"/>
<dbReference type="Proteomes" id="UP000000531">
    <property type="component" value="Chromosome"/>
</dbReference>
<dbReference type="GO" id="GO:0022627">
    <property type="term" value="C:cytosolic small ribosomal subunit"/>
    <property type="evidence" value="ECO:0007669"/>
    <property type="project" value="TreeGrafter"/>
</dbReference>
<dbReference type="GO" id="GO:0043024">
    <property type="term" value="F:ribosomal small subunit binding"/>
    <property type="evidence" value="ECO:0007669"/>
    <property type="project" value="TreeGrafter"/>
</dbReference>
<dbReference type="GO" id="GO:0045900">
    <property type="term" value="P:negative regulation of translational elongation"/>
    <property type="evidence" value="ECO:0007669"/>
    <property type="project" value="TreeGrafter"/>
</dbReference>
<dbReference type="CDD" id="cd00552">
    <property type="entry name" value="RaiA"/>
    <property type="match status" value="1"/>
</dbReference>
<dbReference type="FunFam" id="3.30.160.100:FF:000003">
    <property type="entry name" value="Ribosome hibernation promoting factor"/>
    <property type="match status" value="1"/>
</dbReference>
<dbReference type="FunFam" id="3.30.505.50:FF:000001">
    <property type="entry name" value="Ribosome hibernation promoting factor"/>
    <property type="match status" value="1"/>
</dbReference>
<dbReference type="Gene3D" id="3.30.160.100">
    <property type="entry name" value="Ribosome hibernation promotion factor-like"/>
    <property type="match status" value="1"/>
</dbReference>
<dbReference type="Gene3D" id="3.30.505.50">
    <property type="entry name" value="Sigma 54 modulation/S30EA ribosomal protein, C-terminal domain"/>
    <property type="match status" value="1"/>
</dbReference>
<dbReference type="HAMAP" id="MF_00839">
    <property type="entry name" value="HPF"/>
    <property type="match status" value="1"/>
</dbReference>
<dbReference type="InterPro" id="IPR050574">
    <property type="entry name" value="HPF/YfiA_ribosome-assoc"/>
</dbReference>
<dbReference type="InterPro" id="IPR034694">
    <property type="entry name" value="HPF_long/plastid"/>
</dbReference>
<dbReference type="InterPro" id="IPR036567">
    <property type="entry name" value="RHF-like"/>
</dbReference>
<dbReference type="InterPro" id="IPR003489">
    <property type="entry name" value="RHF/RaiA"/>
</dbReference>
<dbReference type="InterPro" id="IPR032528">
    <property type="entry name" value="Ribosom_S30AE_C"/>
</dbReference>
<dbReference type="InterPro" id="IPR038416">
    <property type="entry name" value="Ribosom_S30AE_C_sf"/>
</dbReference>
<dbReference type="NCBIfam" id="TIGR00741">
    <property type="entry name" value="yfiA"/>
    <property type="match status" value="1"/>
</dbReference>
<dbReference type="PANTHER" id="PTHR33231">
    <property type="entry name" value="30S RIBOSOMAL PROTEIN"/>
    <property type="match status" value="1"/>
</dbReference>
<dbReference type="PANTHER" id="PTHR33231:SF1">
    <property type="entry name" value="30S RIBOSOMAL PROTEIN"/>
    <property type="match status" value="1"/>
</dbReference>
<dbReference type="Pfam" id="PF16321">
    <property type="entry name" value="Ribosom_S30AE_C"/>
    <property type="match status" value="1"/>
</dbReference>
<dbReference type="Pfam" id="PF02482">
    <property type="entry name" value="Ribosomal_S30AE"/>
    <property type="match status" value="1"/>
</dbReference>
<dbReference type="SUPFAM" id="SSF69754">
    <property type="entry name" value="Ribosome binding protein Y (YfiA homologue)"/>
    <property type="match status" value="1"/>
</dbReference>